<dbReference type="EC" id="3.2.2.27" evidence="1"/>
<dbReference type="EMBL" id="CP001177">
    <property type="protein sequence ID" value="ACJ81526.1"/>
    <property type="molecule type" value="Genomic_DNA"/>
</dbReference>
<dbReference type="SMR" id="B7HYF9"/>
<dbReference type="KEGG" id="bcr:BCAH187_A5577"/>
<dbReference type="HOGENOM" id="CLU_032162_3_0_9"/>
<dbReference type="Proteomes" id="UP000002214">
    <property type="component" value="Chromosome"/>
</dbReference>
<dbReference type="GO" id="GO:0005737">
    <property type="term" value="C:cytoplasm"/>
    <property type="evidence" value="ECO:0007669"/>
    <property type="project" value="UniProtKB-SubCell"/>
</dbReference>
<dbReference type="GO" id="GO:0004844">
    <property type="term" value="F:uracil DNA N-glycosylase activity"/>
    <property type="evidence" value="ECO:0007669"/>
    <property type="project" value="UniProtKB-UniRule"/>
</dbReference>
<dbReference type="GO" id="GO:0097510">
    <property type="term" value="P:base-excision repair, AP site formation via deaminated base removal"/>
    <property type="evidence" value="ECO:0007669"/>
    <property type="project" value="TreeGrafter"/>
</dbReference>
<dbReference type="CDD" id="cd10027">
    <property type="entry name" value="UDG-F1-like"/>
    <property type="match status" value="1"/>
</dbReference>
<dbReference type="FunFam" id="3.40.470.10:FF:000001">
    <property type="entry name" value="Uracil-DNA glycosylase"/>
    <property type="match status" value="1"/>
</dbReference>
<dbReference type="Gene3D" id="3.40.470.10">
    <property type="entry name" value="Uracil-DNA glycosylase-like domain"/>
    <property type="match status" value="1"/>
</dbReference>
<dbReference type="HAMAP" id="MF_00148">
    <property type="entry name" value="UDG"/>
    <property type="match status" value="1"/>
</dbReference>
<dbReference type="InterPro" id="IPR002043">
    <property type="entry name" value="UDG_fam1"/>
</dbReference>
<dbReference type="InterPro" id="IPR018085">
    <property type="entry name" value="Ura-DNA_Glyclase_AS"/>
</dbReference>
<dbReference type="InterPro" id="IPR005122">
    <property type="entry name" value="Uracil-DNA_glycosylase-like"/>
</dbReference>
<dbReference type="InterPro" id="IPR036895">
    <property type="entry name" value="Uracil-DNA_glycosylase-like_sf"/>
</dbReference>
<dbReference type="NCBIfam" id="NF003588">
    <property type="entry name" value="PRK05254.1-1"/>
    <property type="match status" value="1"/>
</dbReference>
<dbReference type="NCBIfam" id="NF003589">
    <property type="entry name" value="PRK05254.1-2"/>
    <property type="match status" value="1"/>
</dbReference>
<dbReference type="NCBIfam" id="NF003591">
    <property type="entry name" value="PRK05254.1-4"/>
    <property type="match status" value="1"/>
</dbReference>
<dbReference type="NCBIfam" id="NF003592">
    <property type="entry name" value="PRK05254.1-5"/>
    <property type="match status" value="1"/>
</dbReference>
<dbReference type="NCBIfam" id="TIGR00628">
    <property type="entry name" value="ung"/>
    <property type="match status" value="1"/>
</dbReference>
<dbReference type="PANTHER" id="PTHR11264">
    <property type="entry name" value="URACIL-DNA GLYCOSYLASE"/>
    <property type="match status" value="1"/>
</dbReference>
<dbReference type="PANTHER" id="PTHR11264:SF0">
    <property type="entry name" value="URACIL-DNA GLYCOSYLASE"/>
    <property type="match status" value="1"/>
</dbReference>
<dbReference type="Pfam" id="PF03167">
    <property type="entry name" value="UDG"/>
    <property type="match status" value="1"/>
</dbReference>
<dbReference type="SMART" id="SM00986">
    <property type="entry name" value="UDG"/>
    <property type="match status" value="1"/>
</dbReference>
<dbReference type="SMART" id="SM00987">
    <property type="entry name" value="UreE_C"/>
    <property type="match status" value="1"/>
</dbReference>
<dbReference type="SUPFAM" id="SSF52141">
    <property type="entry name" value="Uracil-DNA glycosylase-like"/>
    <property type="match status" value="1"/>
</dbReference>
<dbReference type="PROSITE" id="PS00130">
    <property type="entry name" value="U_DNA_GLYCOSYLASE"/>
    <property type="match status" value="1"/>
</dbReference>
<accession>B7HYF9</accession>
<sequence length="225" mass="26023">MENVLKNDWGPLLAPEFEKEYYRKLADFLKEEYSTHVVYPKKEDIFNALEYTSYENTKVVILGQDPYHGPNQAHGLSFSVQPGIKTPPSLLNMYKELRDEYGYDIPNNGYLVKWAEQGVLLLNTVLTVRQGEANSHKGKGWEHFTDRVIELLNEREKPVIFILWGRHAQAKKKLITNTKHHIIESVHPSPLSARRGFFGSKPYSKVNTILANMGEREIDWEIPNL</sequence>
<proteinExistence type="inferred from homology"/>
<comment type="function">
    <text evidence="1">Excises uracil residues from the DNA which can arise as a result of misincorporation of dUMP residues by DNA polymerase or due to deamination of cytosine.</text>
</comment>
<comment type="catalytic activity">
    <reaction evidence="1">
        <text>Hydrolyzes single-stranded DNA or mismatched double-stranded DNA and polynucleotides, releasing free uracil.</text>
        <dbReference type="EC" id="3.2.2.27"/>
    </reaction>
</comment>
<comment type="subcellular location">
    <subcellularLocation>
        <location evidence="1">Cytoplasm</location>
    </subcellularLocation>
</comment>
<comment type="similarity">
    <text evidence="1">Belongs to the uracil-DNA glycosylase (UDG) superfamily. UNG family.</text>
</comment>
<organism>
    <name type="scientific">Bacillus cereus (strain AH187)</name>
    <dbReference type="NCBI Taxonomy" id="405534"/>
    <lineage>
        <taxon>Bacteria</taxon>
        <taxon>Bacillati</taxon>
        <taxon>Bacillota</taxon>
        <taxon>Bacilli</taxon>
        <taxon>Bacillales</taxon>
        <taxon>Bacillaceae</taxon>
        <taxon>Bacillus</taxon>
        <taxon>Bacillus cereus group</taxon>
    </lineage>
</organism>
<feature type="chain" id="PRO_1000199765" description="Uracil-DNA glycosylase">
    <location>
        <begin position="1"/>
        <end position="225"/>
    </location>
</feature>
<feature type="active site" description="Proton acceptor" evidence="1">
    <location>
        <position position="65"/>
    </location>
</feature>
<keyword id="KW-0963">Cytoplasm</keyword>
<keyword id="KW-0227">DNA damage</keyword>
<keyword id="KW-0234">DNA repair</keyword>
<keyword id="KW-0378">Hydrolase</keyword>
<gene>
    <name evidence="1" type="primary">ung</name>
    <name type="ordered locus">BCAH187_A5577</name>
</gene>
<name>UNG_BACC7</name>
<protein>
    <recommendedName>
        <fullName evidence="1">Uracil-DNA glycosylase</fullName>
        <shortName evidence="1">UDG</shortName>
        <ecNumber evidence="1">3.2.2.27</ecNumber>
    </recommendedName>
</protein>
<evidence type="ECO:0000255" key="1">
    <source>
        <dbReference type="HAMAP-Rule" id="MF_00148"/>
    </source>
</evidence>
<reference key="1">
    <citation type="submission" date="2008-10" db="EMBL/GenBank/DDBJ databases">
        <title>Genome sequence of Bacillus cereus AH187.</title>
        <authorList>
            <person name="Dodson R.J."/>
            <person name="Durkin A.S."/>
            <person name="Rosovitz M.J."/>
            <person name="Rasko D.A."/>
            <person name="Kolsto A.B."/>
            <person name="Okstad O.A."/>
            <person name="Ravel J."/>
            <person name="Sutton G."/>
        </authorList>
    </citation>
    <scope>NUCLEOTIDE SEQUENCE [LARGE SCALE GENOMIC DNA]</scope>
    <source>
        <strain>AH187</strain>
    </source>
</reference>